<organismHost>
    <name type="scientific">Homo sapiens</name>
    <name type="common">Human</name>
    <dbReference type="NCBI Taxonomy" id="9606"/>
</organismHost>
<organismHost>
    <name type="scientific">Myodes glareolus</name>
    <name type="common">Bank vole</name>
    <name type="synonym">Clethrionomys glareolus</name>
    <dbReference type="NCBI Taxonomy" id="447135"/>
</organismHost>
<protein>
    <recommendedName>
        <fullName>Envelope glycoprotein</fullName>
    </recommendedName>
    <alternativeName>
        <fullName>M polyprotein</fullName>
    </alternativeName>
    <component>
        <recommendedName>
            <fullName evidence="2">Glycoprotein C</fullName>
            <shortName>Gc</shortName>
        </recommendedName>
        <alternativeName>
            <fullName>Glycoprotein G2</fullName>
        </alternativeName>
    </component>
</protein>
<name>GP_PUUMU</name>
<comment type="function">
    <molecule>Glycoprotein C</molecule>
    <text evidence="2">Forms homotetramers with glycoprotein N at the surface of the virion. Attaches the virion to host cell receptors including integrin ITGAV/ITGB3. This attachment induces virion internalization predominantly through clathrin-dependent endocytosis. Class II fusion protein that promotes fusion of viral membrane with host endosomal membrane after endocytosis of the virion.</text>
</comment>
<comment type="subunit">
    <molecule>Glycoprotein C</molecule>
    <text evidence="2 3 4">Homodimer. Homotetramer; forms heterotetrameric Gn-Gc spikes in the pre-fusion conformation (By similarity). Homotrimer; forms homotrimer in the post-fusion conformation at acidic pH (By similarity). Interacts (via C-terminus) with the nucleoprotein (By similarity).</text>
</comment>
<comment type="subcellular location">
    <molecule>Glycoprotein C</molecule>
    <subcellularLocation>
        <location evidence="2">Virion membrane</location>
        <topology evidence="7">Single-pass type I membrane protein</topology>
    </subcellularLocation>
    <subcellularLocation>
        <location evidence="2">Host cell surface</location>
    </subcellularLocation>
    <subcellularLocation>
        <location evidence="2">Host Golgi apparatus membrane</location>
        <topology evidence="2">Single-pass type I membrane protein</topology>
    </subcellularLocation>
    <subcellularLocation>
        <location evidence="2">Host endoplasmic reticulum membrane</location>
        <topology evidence="2">Single-pass type I membrane protein</topology>
    </subcellularLocation>
</comment>
<comment type="domain">
    <molecule>Glycoprotein C</molecule>
    <text evidence="3">The C-terminus is necessary for proper localization in the Golgi (By similarity). The cytoplasmic tail is involved in binding to the nucleocapsid (By similarity).</text>
</comment>
<comment type="PTM">
    <molecule>Envelope glycoprotein</molecule>
    <text evidence="2">Envelope polyprotein precursor is quickly cleaved in vivo just after synthesis, presumably by host signal peptidase.</text>
</comment>
<comment type="similarity">
    <text evidence="7">Belongs to the hantavirus envelope glycoprotein family.</text>
</comment>
<dbReference type="EMBL" id="Z21509">
    <property type="protein sequence ID" value="CAA79722.1"/>
    <property type="molecule type" value="Genomic_RNA"/>
</dbReference>
<dbReference type="SMR" id="Q09120"/>
<dbReference type="GlyCosmos" id="Q09120">
    <property type="glycosylation" value="1 site, No reported glycans"/>
</dbReference>
<dbReference type="GO" id="GO:0044167">
    <property type="term" value="C:host cell endoplasmic reticulum membrane"/>
    <property type="evidence" value="ECO:0007669"/>
    <property type="project" value="UniProtKB-SubCell"/>
</dbReference>
<dbReference type="GO" id="GO:0044178">
    <property type="term" value="C:host cell Golgi membrane"/>
    <property type="evidence" value="ECO:0007669"/>
    <property type="project" value="UniProtKB-SubCell"/>
</dbReference>
<dbReference type="GO" id="GO:0044228">
    <property type="term" value="C:host cell surface"/>
    <property type="evidence" value="ECO:0007669"/>
    <property type="project" value="UniProtKB-SubCell"/>
</dbReference>
<dbReference type="GO" id="GO:0016020">
    <property type="term" value="C:membrane"/>
    <property type="evidence" value="ECO:0007669"/>
    <property type="project" value="UniProtKB-KW"/>
</dbReference>
<dbReference type="GO" id="GO:0055036">
    <property type="term" value="C:virion membrane"/>
    <property type="evidence" value="ECO:0007669"/>
    <property type="project" value="UniProtKB-SubCell"/>
</dbReference>
<dbReference type="GO" id="GO:0039654">
    <property type="term" value="P:fusion of virus membrane with host endosome membrane"/>
    <property type="evidence" value="ECO:0007669"/>
    <property type="project" value="UniProtKB-KW"/>
</dbReference>
<dbReference type="GO" id="GO:0046718">
    <property type="term" value="P:symbiont entry into host cell"/>
    <property type="evidence" value="ECO:0007669"/>
    <property type="project" value="UniProtKB-KW"/>
</dbReference>
<dbReference type="GO" id="GO:0019062">
    <property type="term" value="P:virion attachment to host cell"/>
    <property type="evidence" value="ECO:0007669"/>
    <property type="project" value="UniProtKB-KW"/>
</dbReference>
<dbReference type="InterPro" id="IPR048791">
    <property type="entry name" value="Gc_C_bunya"/>
</dbReference>
<dbReference type="InterPro" id="IPR002532">
    <property type="entry name" value="Hanta_Gc_N"/>
</dbReference>
<dbReference type="Pfam" id="PF20682">
    <property type="entry name" value="Hanta_Gc_C"/>
    <property type="match status" value="1"/>
</dbReference>
<dbReference type="Pfam" id="PF01561">
    <property type="entry name" value="Hanta_Gc_N"/>
    <property type="match status" value="1"/>
</dbReference>
<keyword id="KW-1015">Disulfide bond</keyword>
<keyword id="KW-1170">Fusion of virus membrane with host endosomal membrane</keyword>
<keyword id="KW-1168">Fusion of virus membrane with host membrane</keyword>
<keyword id="KW-0325">Glycoprotein</keyword>
<keyword id="KW-1038">Host endoplasmic reticulum</keyword>
<keyword id="KW-1040">Host Golgi apparatus</keyword>
<keyword id="KW-1043">Host membrane</keyword>
<keyword id="KW-0945">Host-virus interaction</keyword>
<keyword id="KW-0472">Membrane</keyword>
<keyword id="KW-0597">Phosphoprotein</keyword>
<keyword id="KW-0677">Repeat</keyword>
<keyword id="KW-0812">Transmembrane</keyword>
<keyword id="KW-1133">Transmembrane helix</keyword>
<keyword id="KW-1161">Viral attachment to host cell</keyword>
<keyword id="KW-1162">Viral penetration into host cytoplasm</keyword>
<keyword id="KW-0946">Virion</keyword>
<keyword id="KW-1160">Virus entry into host cell</keyword>
<accession>Q09120</accession>
<sequence>CQFDGNTISGYKRMIATKDSFQSFNVTEPHISASALEWIDPDSSLRDHINVIVSRDLSFQDLSETPCQIDLSTASIDGAWGSGVGFNLVCTVSLTECSAFLTSIKACDAAMCYGSTTANLVRGQNTIHIVGKGGHSGSKFMCCHDTKCSTTGLVAAAPHLDRVTGYNQADSDKIFDDGAPECGMSCWFKKSGEWILGVLNGNWMVVAVLIALLILSILLFTLCCPRRPSYRKEHKP</sequence>
<evidence type="ECO:0000250" key="1"/>
<evidence type="ECO:0000250" key="2">
    <source>
        <dbReference type="UniProtKB" id="P08668"/>
    </source>
</evidence>
<evidence type="ECO:0000250" key="3">
    <source>
        <dbReference type="UniProtKB" id="P27312"/>
    </source>
</evidence>
<evidence type="ECO:0000250" key="4">
    <source>
        <dbReference type="UniProtKB" id="P41266"/>
    </source>
</evidence>
<evidence type="ECO:0000250" key="5">
    <source>
        <dbReference type="UniProtKB" id="Q9E006"/>
    </source>
</evidence>
<evidence type="ECO:0000255" key="6"/>
<evidence type="ECO:0000305" key="7"/>
<proteinExistence type="inferred from homology"/>
<reference key="1">
    <citation type="journal article" date="1994" name="J. Gen. Virol.">
        <title>Sequences of wild Puumala virus genes show a correlation of genetic variation with geographic origin of the strains.</title>
        <authorList>
            <person name="Plyusnin A."/>
            <person name="Vapalahti O."/>
            <person name="Ulfves K."/>
            <person name="Lehvaeslaiho H."/>
            <person name="Apekina N."/>
            <person name="Gavrilovskaya I."/>
            <person name="Blinov V."/>
            <person name="Vaheri A."/>
        </authorList>
    </citation>
    <scope>NUCLEOTIDE SEQUENCE [GENOMIC RNA]</scope>
</reference>
<reference key="2">
    <citation type="journal article" date="2014" name="Viruses">
        <title>Hantavirus Gn and Gc envelope glycoproteins: key structural units for virus cell entry and virus assembly.</title>
        <authorList>
            <person name="Cifuentes-Munoz N."/>
            <person name="Salazar-Quiroz N."/>
            <person name="Tischler N.D."/>
        </authorList>
    </citation>
    <scope>REVIEW</scope>
</reference>
<gene>
    <name type="primary">GP</name>
</gene>
<organism>
    <name type="scientific">Puumala virus (strain Udmurtia/894CG/91)</name>
    <dbReference type="NCBI Taxonomy" id="39003"/>
    <lineage>
        <taxon>Viruses</taxon>
        <taxon>Riboviria</taxon>
        <taxon>Orthornavirae</taxon>
        <taxon>Negarnaviricota</taxon>
        <taxon>Polyploviricotina</taxon>
        <taxon>Ellioviricetes</taxon>
        <taxon>Bunyavirales</taxon>
        <taxon>Hantaviridae</taxon>
        <taxon>Mammantavirinae</taxon>
        <taxon>Orthohantavirus</taxon>
        <taxon>Orthohantavirus puumalaense</taxon>
    </lineage>
</organism>
<feature type="chain" id="PRO_0000232520" description="Envelope glycoprotein">
    <location>
        <begin position="1" status="less than"/>
        <end position="236"/>
    </location>
</feature>
<feature type="chain" id="PRO_0000036834" description="Glycoprotein C" evidence="1">
    <location>
        <begin position="1" status="less than"/>
        <end position="236"/>
    </location>
</feature>
<feature type="topological domain" description="Lumenal" evidence="6">
    <location>
        <begin position="1" status="less than"/>
        <end position="202"/>
    </location>
</feature>
<feature type="transmembrane region" description="Helical" evidence="6">
    <location>
        <begin position="203"/>
        <end position="223"/>
    </location>
</feature>
<feature type="topological domain" description="Cytoplasmic" evidence="6">
    <location>
        <begin position="224"/>
        <end position="236"/>
    </location>
</feature>
<feature type="region of interest" description="Binding to the ribonucleoprotein" evidence="3">
    <location>
        <begin position="219"/>
        <end position="236"/>
    </location>
</feature>
<feature type="region of interest" description="Binding to the ribonucleoprotein" evidence="3">
    <location>
        <begin position="219"/>
        <end position="231"/>
    </location>
</feature>
<feature type="glycosylation site" description="N-linked (GlcNAc...) asparagine; by host" evidence="4">
    <location>
        <position position="25"/>
    </location>
</feature>
<feature type="disulfide bond" evidence="2">
    <location>
        <begin position="67"/>
        <end position="97"/>
    </location>
</feature>
<feature type="disulfide bond" evidence="2">
    <location>
        <begin position="90"/>
        <end position="142"/>
    </location>
</feature>
<feature type="disulfide bond" evidence="2">
    <location>
        <begin position="107"/>
        <end position="112"/>
    </location>
</feature>
<feature type="disulfide bond" evidence="2">
    <location>
        <begin position="143"/>
        <end position="148"/>
    </location>
</feature>
<feature type="disulfide bond" evidence="5">
    <location>
        <begin position="182"/>
        <end position="186"/>
    </location>
</feature>
<feature type="non-terminal residue">
    <location>
        <position position="1"/>
    </location>
</feature>